<dbReference type="EC" id="3.4.23.-"/>
<dbReference type="EMBL" id="L34360">
    <property type="protein sequence ID" value="AAA81530.1"/>
    <property type="molecule type" value="Genomic_DNA"/>
</dbReference>
<dbReference type="PIR" id="I46616">
    <property type="entry name" value="I46616"/>
</dbReference>
<dbReference type="SMR" id="Q29078"/>
<dbReference type="STRING" id="9823.ENSSSCP00000013930"/>
<dbReference type="MEROPS" id="A01.971"/>
<dbReference type="GlyGen" id="Q29078">
    <property type="glycosylation" value="3 sites"/>
</dbReference>
<dbReference type="PaxDb" id="9823-ENSSSCP00000013930"/>
<dbReference type="eggNOG" id="KOG1339">
    <property type="taxonomic scope" value="Eukaryota"/>
</dbReference>
<dbReference type="InParanoid" id="Q29078"/>
<dbReference type="Proteomes" id="UP000008227">
    <property type="component" value="Unplaced"/>
</dbReference>
<dbReference type="Proteomes" id="UP000314985">
    <property type="component" value="Unplaced"/>
</dbReference>
<dbReference type="Proteomes" id="UP000694570">
    <property type="component" value="Unplaced"/>
</dbReference>
<dbReference type="Proteomes" id="UP000694571">
    <property type="component" value="Unplaced"/>
</dbReference>
<dbReference type="Proteomes" id="UP000694720">
    <property type="component" value="Unplaced"/>
</dbReference>
<dbReference type="Proteomes" id="UP000694722">
    <property type="component" value="Unplaced"/>
</dbReference>
<dbReference type="Proteomes" id="UP000694723">
    <property type="component" value="Unplaced"/>
</dbReference>
<dbReference type="Proteomes" id="UP000694724">
    <property type="component" value="Unplaced"/>
</dbReference>
<dbReference type="Proteomes" id="UP000694725">
    <property type="component" value="Unplaced"/>
</dbReference>
<dbReference type="Proteomes" id="UP000694726">
    <property type="component" value="Unplaced"/>
</dbReference>
<dbReference type="Proteomes" id="UP000694727">
    <property type="component" value="Unplaced"/>
</dbReference>
<dbReference type="Proteomes" id="UP000694728">
    <property type="component" value="Unplaced"/>
</dbReference>
<dbReference type="GO" id="GO:0005576">
    <property type="term" value="C:extracellular region"/>
    <property type="evidence" value="ECO:0007669"/>
    <property type="project" value="UniProtKB-SubCell"/>
</dbReference>
<dbReference type="GO" id="GO:0004190">
    <property type="term" value="F:aspartic-type endopeptidase activity"/>
    <property type="evidence" value="ECO:0000318"/>
    <property type="project" value="GO_Central"/>
</dbReference>
<dbReference type="GO" id="GO:0006508">
    <property type="term" value="P:proteolysis"/>
    <property type="evidence" value="ECO:0000318"/>
    <property type="project" value="GO_Central"/>
</dbReference>
<dbReference type="FunFam" id="2.40.70.10:FF:000006">
    <property type="entry name" value="Cathepsin E"/>
    <property type="match status" value="1"/>
</dbReference>
<dbReference type="FunFam" id="2.40.70.10:FF:000004">
    <property type="entry name" value="Pepsin A"/>
    <property type="match status" value="1"/>
</dbReference>
<dbReference type="Gene3D" id="6.10.140.60">
    <property type="match status" value="1"/>
</dbReference>
<dbReference type="Gene3D" id="2.40.70.10">
    <property type="entry name" value="Acid Proteases"/>
    <property type="match status" value="2"/>
</dbReference>
<dbReference type="InterPro" id="IPR001461">
    <property type="entry name" value="Aspartic_peptidase_A1"/>
</dbReference>
<dbReference type="InterPro" id="IPR001969">
    <property type="entry name" value="Aspartic_peptidase_AS"/>
</dbReference>
<dbReference type="InterPro" id="IPR012848">
    <property type="entry name" value="Aspartic_peptidase_N"/>
</dbReference>
<dbReference type="InterPro" id="IPR033121">
    <property type="entry name" value="PEPTIDASE_A1"/>
</dbReference>
<dbReference type="InterPro" id="IPR021109">
    <property type="entry name" value="Peptidase_aspartic_dom_sf"/>
</dbReference>
<dbReference type="PANTHER" id="PTHR47966">
    <property type="entry name" value="BETA-SITE APP-CLEAVING ENZYME, ISOFORM A-RELATED"/>
    <property type="match status" value="1"/>
</dbReference>
<dbReference type="PANTHER" id="PTHR47966:SF49">
    <property type="entry name" value="PEPSIN A-5"/>
    <property type="match status" value="1"/>
</dbReference>
<dbReference type="Pfam" id="PF07966">
    <property type="entry name" value="A1_Propeptide"/>
    <property type="match status" value="1"/>
</dbReference>
<dbReference type="Pfam" id="PF00026">
    <property type="entry name" value="Asp"/>
    <property type="match status" value="1"/>
</dbReference>
<dbReference type="PRINTS" id="PR00792">
    <property type="entry name" value="PEPSIN"/>
</dbReference>
<dbReference type="SUPFAM" id="SSF50630">
    <property type="entry name" value="Acid proteases"/>
    <property type="match status" value="1"/>
</dbReference>
<dbReference type="PROSITE" id="PS00141">
    <property type="entry name" value="ASP_PROTEASE"/>
    <property type="match status" value="1"/>
</dbReference>
<dbReference type="PROSITE" id="PS51767">
    <property type="entry name" value="PEPTIDASE_A1"/>
    <property type="match status" value="1"/>
</dbReference>
<protein>
    <recommendedName>
        <fullName>Pregnancy-associated glycoprotein 1</fullName>
        <shortName>PAG 1</shortName>
        <shortName>PAG1</shortName>
        <ecNumber>3.4.23.-</ecNumber>
    </recommendedName>
</protein>
<accession>Q29078</accession>
<comment type="function">
    <text>Appears to be proteolytically inactive.</text>
</comment>
<comment type="subcellular location">
    <subcellularLocation>
        <location>Secreted</location>
        <location>Extracellular space</location>
    </subcellularLocation>
</comment>
<comment type="tissue specificity">
    <text>Expressed throughout the chorion, with the signal localized exclusively over the trophectoderm.</text>
</comment>
<comment type="developmental stage">
    <text>Expression was detected at day 15, coinciding with the beginning of implantation, and continued throughout gestation.</text>
</comment>
<comment type="similarity">
    <text evidence="5">Belongs to the peptidase A1 family.</text>
</comment>
<organism>
    <name type="scientific">Sus scrofa</name>
    <name type="common">Pig</name>
    <dbReference type="NCBI Taxonomy" id="9823"/>
    <lineage>
        <taxon>Eukaryota</taxon>
        <taxon>Metazoa</taxon>
        <taxon>Chordata</taxon>
        <taxon>Craniata</taxon>
        <taxon>Vertebrata</taxon>
        <taxon>Euteleostomi</taxon>
        <taxon>Mammalia</taxon>
        <taxon>Eutheria</taxon>
        <taxon>Laurasiatheria</taxon>
        <taxon>Artiodactyla</taxon>
        <taxon>Suina</taxon>
        <taxon>Suidae</taxon>
        <taxon>Sus</taxon>
    </lineage>
</organism>
<evidence type="ECO:0000250" key="1"/>
<evidence type="ECO:0000255" key="2"/>
<evidence type="ECO:0000255" key="3">
    <source>
        <dbReference type="PROSITE-ProRule" id="PRU01103"/>
    </source>
</evidence>
<evidence type="ECO:0000255" key="4">
    <source>
        <dbReference type="PROSITE-ProRule" id="PRU10094"/>
    </source>
</evidence>
<evidence type="ECO:0000305" key="5"/>
<reference key="1">
    <citation type="journal article" date="1995" name="Biol. Reprod.">
        <title>Porcine pregnancy-associated glycoproteins: new members of the aspartic proteinase gene family expressed in trophectoderm.</title>
        <authorList>
            <person name="Szafranska B."/>
            <person name="Xie S."/>
            <person name="Green J."/>
            <person name="Roberts R.M."/>
        </authorList>
    </citation>
    <scope>NUCLEOTIDE SEQUENCE [GENOMIC DNA]</scope>
</reference>
<name>PAG1_PIG</name>
<feature type="signal peptide" evidence="2">
    <location>
        <begin position="1"/>
        <end position="15"/>
    </location>
</feature>
<feature type="propeptide" id="PRO_0000026105" description="Activation peptide" evidence="2">
    <location>
        <begin position="16"/>
        <end status="unknown"/>
    </location>
</feature>
<feature type="chain" id="PRO_0000026106" description="Pregnancy-associated glycoprotein 1">
    <location>
        <begin status="unknown"/>
        <end position="389"/>
    </location>
</feature>
<feature type="domain" description="Peptidase A1" evidence="3">
    <location>
        <begin position="76"/>
        <end position="386"/>
    </location>
</feature>
<feature type="active site" evidence="4">
    <location>
        <position position="94"/>
    </location>
</feature>
<feature type="active site" evidence="4">
    <location>
        <position position="277"/>
    </location>
</feature>
<feature type="glycosylation site" description="N-linked (GlcNAc...) asparagine" evidence="2">
    <location>
        <position position="79"/>
    </location>
</feature>
<feature type="glycosylation site" description="N-linked (GlcNAc...) asparagine" evidence="2">
    <location>
        <position position="130"/>
    </location>
</feature>
<feature type="glycosylation site" description="N-linked (GlcNAc...) asparagine" evidence="2">
    <location>
        <position position="348"/>
    </location>
</feature>
<feature type="disulfide bond" evidence="1">
    <location>
        <begin position="107"/>
        <end position="112"/>
    </location>
</feature>
<feature type="disulfide bond" evidence="1">
    <location>
        <begin position="268"/>
        <end position="272"/>
    </location>
</feature>
<feature type="disulfide bond" evidence="1">
    <location>
        <begin position="311"/>
        <end position="345"/>
    </location>
</feature>
<proteinExistence type="evidence at transcript level"/>
<keyword id="KW-0064">Aspartyl protease</keyword>
<keyword id="KW-1015">Disulfide bond</keyword>
<keyword id="KW-0325">Glycoprotein</keyword>
<keyword id="KW-0378">Hydrolase</keyword>
<keyword id="KW-0645">Protease</keyword>
<keyword id="KW-1185">Reference proteome</keyword>
<keyword id="KW-0964">Secreted</keyword>
<keyword id="KW-0732">Signal</keyword>
<keyword id="KW-0865">Zymogen</keyword>
<sequence length="389" mass="43533">MKWLVILGLVALSECLVIIPLTKVKSIRENLREKDLLLNFLKEHPYNMIQKFGLKGSLCSPKISCLRLWNYLDMVYVGNITIGTPPQLFSVIFDTASSDLWVPSNQCHSRACVTHRSFNPTLSSTFQSSNRTVKLAPHSGLVSGLLGYDTVQIGRFKSENQAFGLSQSEPVKELENAFFDGVLGLGYPSLAIQGTTPVFDNLRKQGQIPEPVFALYLSTNTKKGSVLMIGGVDNNFFTGNLKWVPLSARNYWQITLDRITWRGVVVGCTRGCQAILDSGSAFLLGPSRQISSIQKIIQARFIENEYQVRCCARTTLADFIFTINNVQYPVPARAYIRKGSTPRRCYSNFSGGTESLGKEETWILGEVFLRLYFTVFDRGQNRIGLRIAV</sequence>